<feature type="chain" id="PRO_0000059594" description="DNA ligase">
    <location>
        <begin position="1"/>
        <end position="419"/>
    </location>
</feature>
<feature type="region of interest" description="NTD" evidence="2">
    <location>
        <begin position="1"/>
        <end position="120"/>
    </location>
</feature>
<feature type="region of interest" description="AD domain" evidence="2">
    <location>
        <begin position="121"/>
        <end position="317"/>
    </location>
</feature>
<feature type="region of interest" description="OB domain" evidence="2">
    <location>
        <begin position="318"/>
        <end position="419"/>
    </location>
</feature>
<feature type="active site" description="N6-AMP-lysine intermediate" evidence="3">
    <location>
        <position position="151"/>
    </location>
</feature>
<feature type="binding site" evidence="2">
    <location>
        <position position="149"/>
    </location>
    <ligand>
        <name>ATP</name>
        <dbReference type="ChEBI" id="CHEBI:30616"/>
    </ligand>
</feature>
<feature type="binding site" evidence="2">
    <location>
        <position position="151"/>
    </location>
    <ligand>
        <name>ATP</name>
        <dbReference type="ChEBI" id="CHEBI:30616"/>
    </ligand>
</feature>
<feature type="binding site" evidence="1">
    <location>
        <position position="203"/>
    </location>
    <ligand>
        <name>a divalent metal cation</name>
        <dbReference type="ChEBI" id="CHEBI:60240"/>
        <label>1</label>
    </ligand>
</feature>
<feature type="binding site" evidence="2">
    <location>
        <position position="203"/>
    </location>
    <ligand>
        <name>ATP</name>
        <dbReference type="ChEBI" id="CHEBI:30616"/>
    </ligand>
</feature>
<feature type="binding site" evidence="2">
    <location>
        <position position="232"/>
    </location>
    <ligand>
        <name>ATP</name>
        <dbReference type="ChEBI" id="CHEBI:30616"/>
    </ligand>
</feature>
<feature type="binding site" evidence="1">
    <location>
        <position position="291"/>
    </location>
    <ligand>
        <name>a divalent metal cation</name>
        <dbReference type="ChEBI" id="CHEBI:60240"/>
        <label>2</label>
    </ligand>
</feature>
<feature type="binding site" evidence="2">
    <location>
        <position position="294"/>
    </location>
    <ligand>
        <name>ATP</name>
        <dbReference type="ChEBI" id="CHEBI:30616"/>
    </ligand>
</feature>
<feature type="binding site" evidence="2">
    <location>
        <position position="316"/>
    </location>
    <ligand>
        <name>ATP</name>
        <dbReference type="ChEBI" id="CHEBI:30616"/>
    </ligand>
</feature>
<feature type="site" description="Important for the catalytic efficiency" evidence="2">
    <location>
        <position position="153"/>
    </location>
</feature>
<feature type="site" description="Important for the catalytic efficiency" evidence="2">
    <location>
        <position position="211"/>
    </location>
</feature>
<feature type="site" description="Important for the catalytic efficiency" evidence="2">
    <location>
        <position position="402"/>
    </location>
</feature>
<feature type="site" description="Important for the catalytic efficiency" evidence="2">
    <location>
        <position position="403"/>
    </location>
</feature>
<feature type="sequence conflict" description="In Ref. 3." evidence="4" ref="3">
    <original>HG</original>
    <variation>QR</variation>
    <location>
        <begin position="149"/>
        <end position="150"/>
    </location>
</feature>
<keyword id="KW-0067">ATP-binding</keyword>
<keyword id="KW-0131">Cell cycle</keyword>
<keyword id="KW-0132">Cell division</keyword>
<keyword id="KW-0227">DNA damage</keyword>
<keyword id="KW-0233">DNA recombination</keyword>
<keyword id="KW-0234">DNA repair</keyword>
<keyword id="KW-0235">DNA replication</keyword>
<keyword id="KW-0436">Ligase</keyword>
<keyword id="KW-0479">Metal-binding</keyword>
<keyword id="KW-0547">Nucleotide-binding</keyword>
<keyword id="KW-0946">Virion</keyword>
<organismHost>
    <name type="scientific">Ornithodoros</name>
    <name type="common">relapsing fever ticks</name>
    <dbReference type="NCBI Taxonomy" id="6937"/>
</organismHost>
<organismHost>
    <name type="scientific">Phacochoerus aethiopicus</name>
    <name type="common">Warthog</name>
    <dbReference type="NCBI Taxonomy" id="85517"/>
</organismHost>
<organismHost>
    <name type="scientific">Phacochoerus africanus</name>
    <name type="common">Warthog</name>
    <dbReference type="NCBI Taxonomy" id="41426"/>
</organismHost>
<organismHost>
    <name type="scientific">Potamochoerus larvatus</name>
    <name type="common">Bushpig</name>
    <dbReference type="NCBI Taxonomy" id="273792"/>
</organismHost>
<organismHost>
    <name type="scientific">Sus scrofa</name>
    <name type="common">Pig</name>
    <dbReference type="NCBI Taxonomy" id="9823"/>
</organismHost>
<sequence length="419" mass="48041">MLSQFPGQCSNNVFCFPPIESETKNGKKASWIICVQVMQHNTILPITDEMFSTDVKDAVAEIFTKFFVEEGAVRISKTTRVTEGKNLGKKNATTVVHQAFKDALSKYNRHARQKRGAHTNRGMIPPMLVKYFNIIPKTFFEEETDPIVHGKRNGVRAVACQQGDGSILLYSRTEKEFLGLDNIKKELKQLYLFIDVRVYLDGELYLHRKPLQWIAGQANAKADSSELHFYVFDCFWSDQLQMPSNKRQQLLTNIFKQKEDLTFIHQVENFSVKNEDEALRLKTQFIKEGYEGAIVRNANGPYEPGYNNYHSPHLAKLKPLLDAEFILVDYTQGKKGKDLGAILWVCELPNKKRFVVTPKHLTYADRYALFQKLTPALFKKHLYGKELTVEYAELSPKTGIPLQARAVGFREPINVLEII</sequence>
<dbReference type="EC" id="6.5.1.1" evidence="3"/>
<dbReference type="EMBL" id="X65192">
    <property type="protein sequence ID" value="CAA46310.1"/>
    <property type="molecule type" value="Genomic_DNA"/>
</dbReference>
<dbReference type="EMBL" id="X71982">
    <property type="protein sequence ID" value="CAA50805.1"/>
    <property type="molecule type" value="Genomic_DNA"/>
</dbReference>
<dbReference type="EMBL" id="AY261361">
    <property type="status" value="NOT_ANNOTATED_CDS"/>
    <property type="molecule type" value="Genomic_DNA"/>
</dbReference>
<dbReference type="PIR" id="S23018">
    <property type="entry name" value="S23018"/>
</dbReference>
<dbReference type="SMR" id="P26813"/>
<dbReference type="Proteomes" id="UP000000860">
    <property type="component" value="Segment"/>
</dbReference>
<dbReference type="GO" id="GO:0044423">
    <property type="term" value="C:virion component"/>
    <property type="evidence" value="ECO:0007669"/>
    <property type="project" value="UniProtKB-KW"/>
</dbReference>
<dbReference type="GO" id="GO:0005524">
    <property type="term" value="F:ATP binding"/>
    <property type="evidence" value="ECO:0007669"/>
    <property type="project" value="UniProtKB-KW"/>
</dbReference>
<dbReference type="GO" id="GO:0003910">
    <property type="term" value="F:DNA ligase (ATP) activity"/>
    <property type="evidence" value="ECO:0007669"/>
    <property type="project" value="UniProtKB-EC"/>
</dbReference>
<dbReference type="GO" id="GO:0046872">
    <property type="term" value="F:metal ion binding"/>
    <property type="evidence" value="ECO:0007669"/>
    <property type="project" value="UniProtKB-KW"/>
</dbReference>
<dbReference type="GO" id="GO:0051301">
    <property type="term" value="P:cell division"/>
    <property type="evidence" value="ECO:0007669"/>
    <property type="project" value="UniProtKB-KW"/>
</dbReference>
<dbReference type="GO" id="GO:0006310">
    <property type="term" value="P:DNA recombination"/>
    <property type="evidence" value="ECO:0007669"/>
    <property type="project" value="UniProtKB-KW"/>
</dbReference>
<dbReference type="GO" id="GO:0006281">
    <property type="term" value="P:DNA repair"/>
    <property type="evidence" value="ECO:0007669"/>
    <property type="project" value="UniProtKB-KW"/>
</dbReference>
<dbReference type="GO" id="GO:0006260">
    <property type="term" value="P:DNA replication"/>
    <property type="evidence" value="ECO:0007669"/>
    <property type="project" value="UniProtKB-KW"/>
</dbReference>
<dbReference type="Gene3D" id="3.30.470.30">
    <property type="entry name" value="DNA ligase/mRNA capping enzyme"/>
    <property type="match status" value="1"/>
</dbReference>
<dbReference type="InterPro" id="IPR012310">
    <property type="entry name" value="DNA_ligase_ATP-dep_cent"/>
</dbReference>
<dbReference type="InterPro" id="IPR016059">
    <property type="entry name" value="DNA_ligase_ATP-dep_CS"/>
</dbReference>
<dbReference type="InterPro" id="IPR012340">
    <property type="entry name" value="NA-bd_OB-fold"/>
</dbReference>
<dbReference type="InterPro" id="IPR050326">
    <property type="entry name" value="NAD_dep_DNA_ligaseB"/>
</dbReference>
<dbReference type="PANTHER" id="PTHR47810">
    <property type="entry name" value="DNA LIGASE"/>
    <property type="match status" value="1"/>
</dbReference>
<dbReference type="PANTHER" id="PTHR47810:SF5">
    <property type="entry name" value="LIGASE, PUTATIVE-RELATED"/>
    <property type="match status" value="1"/>
</dbReference>
<dbReference type="Pfam" id="PF01068">
    <property type="entry name" value="DNA_ligase_A_M"/>
    <property type="match status" value="1"/>
</dbReference>
<dbReference type="SUPFAM" id="SSF56091">
    <property type="entry name" value="DNA ligase/mRNA capping enzyme, catalytic domain"/>
    <property type="match status" value="1"/>
</dbReference>
<dbReference type="SUPFAM" id="SSF50249">
    <property type="entry name" value="Nucleic acid-binding proteins"/>
    <property type="match status" value="1"/>
</dbReference>
<dbReference type="PROSITE" id="PS00697">
    <property type="entry name" value="DNA_LIGASE_A1"/>
    <property type="match status" value="1"/>
</dbReference>
<dbReference type="PROSITE" id="PS00333">
    <property type="entry name" value="DNA_LIGASE_A2"/>
    <property type="match status" value="1"/>
</dbReference>
<dbReference type="PROSITE" id="PS50160">
    <property type="entry name" value="DNA_LIGASE_A3"/>
    <property type="match status" value="1"/>
</dbReference>
<accession>P26813</accession>
<gene>
    <name type="primary">LIG</name>
    <name type="ordered locus">Mal-108</name>
    <name type="ORF">g3L</name>
</gene>
<protein>
    <recommendedName>
        <fullName evidence="2">DNA ligase</fullName>
        <ecNumber evidence="3">6.5.1.1</ecNumber>
    </recommendedName>
    <alternativeName>
        <fullName>Polydeoxyribonucleotide synthase [ATP]</fullName>
    </alternativeName>
</protein>
<name>DNLI_ASFM2</name>
<organism>
    <name type="scientific">African swine fever virus (isolate Tick/Malawi/Lil 20-1/1983)</name>
    <name type="common">ASFV</name>
    <dbReference type="NCBI Taxonomy" id="10500"/>
    <lineage>
        <taxon>Viruses</taxon>
        <taxon>Varidnaviria</taxon>
        <taxon>Bamfordvirae</taxon>
        <taxon>Nucleocytoviricota</taxon>
        <taxon>Pokkesviricetes</taxon>
        <taxon>Asfuvirales</taxon>
        <taxon>Asfarviridae</taxon>
        <taxon>Asfivirus</taxon>
        <taxon>African swine fever virus</taxon>
    </lineage>
</organism>
<proteinExistence type="inferred from homology"/>
<evidence type="ECO:0000250" key="1"/>
<evidence type="ECO:0000250" key="2">
    <source>
        <dbReference type="UniProtKB" id="P35970"/>
    </source>
</evidence>
<evidence type="ECO:0000255" key="3">
    <source>
        <dbReference type="PROSITE-ProRule" id="PRU10135"/>
    </source>
</evidence>
<evidence type="ECO:0000305" key="4"/>
<reference key="1">
    <citation type="journal article" date="1992" name="Nucleic Acids Res.">
        <title>An African swine fever virus gene with homology to DNA ligases.</title>
        <authorList>
            <person name="Hammond J.M."/>
            <person name="Kerr S.M."/>
            <person name="Smith G.L."/>
            <person name="Dixon L.K."/>
        </authorList>
    </citation>
    <scope>NUCLEOTIDE SEQUENCE [GENOMIC DNA]</scope>
</reference>
<reference key="2">
    <citation type="journal article" date="1994" name="J. Gen. Virol.">
        <title>Nucleotide sequence of a 55 kbp region from the right end of the genome of a pathogenic African swine fever virus isolate (Malawi LIL20/1).</title>
        <authorList>
            <person name="Dixon L.K."/>
            <person name="Twigg S.R.F."/>
            <person name="Baylis S.A."/>
            <person name="Vydelingum S."/>
            <person name="Bristow C."/>
            <person name="Hammond J.M."/>
            <person name="Smith G.L."/>
        </authorList>
    </citation>
    <scope>NUCLEOTIDE SEQUENCE [GENOMIC DNA]</scope>
</reference>
<reference key="3">
    <citation type="submission" date="2003-03" db="EMBL/GenBank/DDBJ databases">
        <title>African swine fever virus genomes.</title>
        <authorList>
            <person name="Kutish G.F."/>
            <person name="Rock D.L."/>
        </authorList>
    </citation>
    <scope>NUCLEOTIDE SEQUENCE [LARGE SCALE GENOMIC DNA]</scope>
</reference>
<comment type="function">
    <text evidence="2">Very low-fidelity DNA ligase that seals nicks in double-stranded DNA during DNA repair (By similarity). Together with the viral repair DNA polymerase X, fills the single nucleotide gaps generated by the AP endonuclease (By similarity). It is not essential for viral replication and recombination (By similarity). Displays a very low adenylation activity towards DNA with 3'-dideoxy- or 3'-amino-terminated nicks compared to regular nick DNA (By similarity).</text>
</comment>
<comment type="catalytic activity">
    <reaction evidence="3">
        <text>ATP + (deoxyribonucleotide)n-3'-hydroxyl + 5'-phospho-(deoxyribonucleotide)m = (deoxyribonucleotide)n+m + AMP + diphosphate.</text>
        <dbReference type="EC" id="6.5.1.1"/>
    </reaction>
</comment>
<comment type="cofactor">
    <cofactor evidence="1">
        <name>a divalent metal cation</name>
        <dbReference type="ChEBI" id="CHEBI:60240"/>
    </cofactor>
</comment>
<comment type="subcellular location">
    <subcellularLocation>
        <location evidence="2">Virion</location>
    </subcellularLocation>
    <text evidence="2">Found in association with the viral nucleoid.</text>
</comment>
<comment type="domain">
    <text evidence="2">The N-terminus domain (NTD) plays a critical role in DNA-binding, catalytic complex assembly and catalysis.</text>
</comment>
<comment type="miscellaneous">
    <text>Consistent with its intracellular location, ASFV encodes its own replicative DNA polymerase and three base excision repair enzymes: a class II AP endonuclease, the repair polymerase Pol X, and an ATP-dependent DNA ligase.</text>
</comment>
<comment type="similarity">
    <text evidence="4">Belongs to the ATP-dependent DNA ligase family.</text>
</comment>